<protein>
    <recommendedName>
        <fullName>RNA polymerase sigma factor SigA3</fullName>
    </recommendedName>
</protein>
<keyword id="KW-0963">Cytoplasm</keyword>
<keyword id="KW-0238">DNA-binding</keyword>
<keyword id="KW-1185">Reference proteome</keyword>
<keyword id="KW-0731">Sigma factor</keyword>
<keyword id="KW-0804">Transcription</keyword>
<keyword id="KW-0805">Transcription regulation</keyword>
<gene>
    <name type="primary">sigA3</name>
    <name type="synonym">rpoD3</name>
    <name type="ordered locus">Synpcc7942_0672</name>
</gene>
<comment type="function">
    <text evidence="1">Sigma factors are initiation factors that promote the attachment of RNA polymerase to specific initiation sites and are then released.</text>
</comment>
<comment type="subcellular location">
    <subcellularLocation>
        <location evidence="2">Cytoplasm</location>
    </subcellularLocation>
</comment>
<comment type="similarity">
    <text evidence="2">Belongs to the sigma-70 factor family.</text>
</comment>
<accession>Q31QG5</accession>
<accession>Q9R6V8</accession>
<dbReference type="EMBL" id="AB024709">
    <property type="protein sequence ID" value="BAA86957.1"/>
    <property type="molecule type" value="Genomic_DNA"/>
</dbReference>
<dbReference type="EMBL" id="CP000100">
    <property type="protein sequence ID" value="ABB56704.1"/>
    <property type="molecule type" value="Genomic_DNA"/>
</dbReference>
<dbReference type="RefSeq" id="WP_011377675.1">
    <property type="nucleotide sequence ID" value="NZ_JACJTX010000005.1"/>
</dbReference>
<dbReference type="SMR" id="Q31QG5"/>
<dbReference type="STRING" id="1140.Synpcc7942_0672"/>
<dbReference type="PaxDb" id="1140-Synpcc7942_0672"/>
<dbReference type="KEGG" id="syf:Synpcc7942_0672"/>
<dbReference type="eggNOG" id="COG0568">
    <property type="taxonomic scope" value="Bacteria"/>
</dbReference>
<dbReference type="HOGENOM" id="CLU_014793_3_4_3"/>
<dbReference type="OrthoDB" id="551215at2"/>
<dbReference type="BioCyc" id="SYNEL:SYNPCC7942_0672-MONOMER"/>
<dbReference type="Proteomes" id="UP000889800">
    <property type="component" value="Chromosome"/>
</dbReference>
<dbReference type="GO" id="GO:0005737">
    <property type="term" value="C:cytoplasm"/>
    <property type="evidence" value="ECO:0007669"/>
    <property type="project" value="UniProtKB-SubCell"/>
</dbReference>
<dbReference type="GO" id="GO:0003677">
    <property type="term" value="F:DNA binding"/>
    <property type="evidence" value="ECO:0007669"/>
    <property type="project" value="UniProtKB-KW"/>
</dbReference>
<dbReference type="GO" id="GO:0016987">
    <property type="term" value="F:sigma factor activity"/>
    <property type="evidence" value="ECO:0007669"/>
    <property type="project" value="UniProtKB-KW"/>
</dbReference>
<dbReference type="GO" id="GO:0006352">
    <property type="term" value="P:DNA-templated transcription initiation"/>
    <property type="evidence" value="ECO:0007669"/>
    <property type="project" value="InterPro"/>
</dbReference>
<dbReference type="CDD" id="cd06171">
    <property type="entry name" value="Sigma70_r4"/>
    <property type="match status" value="1"/>
</dbReference>
<dbReference type="FunFam" id="1.10.601.10:FF:000001">
    <property type="entry name" value="RNA polymerase sigma factor SigA"/>
    <property type="match status" value="1"/>
</dbReference>
<dbReference type="Gene3D" id="1.10.601.10">
    <property type="entry name" value="RNA Polymerase Primary Sigma Factor"/>
    <property type="match status" value="2"/>
</dbReference>
<dbReference type="Gene3D" id="1.10.10.10">
    <property type="entry name" value="Winged helix-like DNA-binding domain superfamily/Winged helix DNA-binding domain"/>
    <property type="match status" value="2"/>
</dbReference>
<dbReference type="InterPro" id="IPR014284">
    <property type="entry name" value="RNA_pol_sigma-70_dom"/>
</dbReference>
<dbReference type="InterPro" id="IPR000943">
    <property type="entry name" value="RNA_pol_sigma70"/>
</dbReference>
<dbReference type="InterPro" id="IPR009042">
    <property type="entry name" value="RNA_pol_sigma70_r1_2"/>
</dbReference>
<dbReference type="InterPro" id="IPR007627">
    <property type="entry name" value="RNA_pol_sigma70_r2"/>
</dbReference>
<dbReference type="InterPro" id="IPR007624">
    <property type="entry name" value="RNA_pol_sigma70_r3"/>
</dbReference>
<dbReference type="InterPro" id="IPR007630">
    <property type="entry name" value="RNA_pol_sigma70_r4"/>
</dbReference>
<dbReference type="InterPro" id="IPR013325">
    <property type="entry name" value="RNA_pol_sigma_r2"/>
</dbReference>
<dbReference type="InterPro" id="IPR013324">
    <property type="entry name" value="RNA_pol_sigma_r3/r4-like"/>
</dbReference>
<dbReference type="InterPro" id="IPR017848">
    <property type="entry name" value="RNA_pol_sigma_RpoD/SigA_cyanob"/>
</dbReference>
<dbReference type="InterPro" id="IPR050239">
    <property type="entry name" value="Sigma-70_RNA_pol_init_factors"/>
</dbReference>
<dbReference type="InterPro" id="IPR036388">
    <property type="entry name" value="WH-like_DNA-bd_sf"/>
</dbReference>
<dbReference type="NCBIfam" id="NF005642">
    <property type="entry name" value="PRK07405.1"/>
    <property type="match status" value="1"/>
</dbReference>
<dbReference type="NCBIfam" id="TIGR02997">
    <property type="entry name" value="Sig70-cyanoRpoD"/>
    <property type="match status" value="1"/>
</dbReference>
<dbReference type="NCBIfam" id="TIGR02937">
    <property type="entry name" value="sigma70-ECF"/>
    <property type="match status" value="1"/>
</dbReference>
<dbReference type="PANTHER" id="PTHR30603">
    <property type="entry name" value="RNA POLYMERASE SIGMA FACTOR RPO"/>
    <property type="match status" value="1"/>
</dbReference>
<dbReference type="PANTHER" id="PTHR30603:SF60">
    <property type="entry name" value="RNA POLYMERASE SIGMA FACTOR RPOD"/>
    <property type="match status" value="1"/>
</dbReference>
<dbReference type="Pfam" id="PF00140">
    <property type="entry name" value="Sigma70_r1_2"/>
    <property type="match status" value="1"/>
</dbReference>
<dbReference type="Pfam" id="PF04542">
    <property type="entry name" value="Sigma70_r2"/>
    <property type="match status" value="1"/>
</dbReference>
<dbReference type="Pfam" id="PF04539">
    <property type="entry name" value="Sigma70_r3"/>
    <property type="match status" value="1"/>
</dbReference>
<dbReference type="Pfam" id="PF04545">
    <property type="entry name" value="Sigma70_r4"/>
    <property type="match status" value="1"/>
</dbReference>
<dbReference type="PRINTS" id="PR00046">
    <property type="entry name" value="SIGMA70FCT"/>
</dbReference>
<dbReference type="SUPFAM" id="SSF88946">
    <property type="entry name" value="Sigma2 domain of RNA polymerase sigma factors"/>
    <property type="match status" value="1"/>
</dbReference>
<dbReference type="SUPFAM" id="SSF88659">
    <property type="entry name" value="Sigma3 and sigma4 domains of RNA polymerase sigma factors"/>
    <property type="match status" value="2"/>
</dbReference>
<sequence>MAKTETPTSDLVRTYLREIGRVPLLTHEEEVVLGKRVQQWMKLQELRQTLQSEEGDRDPSDLEWAAAAGLSIEELRQQQHLGEQAKRKMIEANLRLVVSVAKKYLKRNMDLLDLIQEGTIGMQRGVEKFDPTKGYRFSTYAYWWIRQAITRAIAEKARTIRLPIHITEKLNKIKKMQRQLSQQLGRTATLPELAAALDLTPAQVRDYLEKARHPLSLDLRVGDNQDTELGDLLETDCTTPEEFTLQASMRRDIDRLLDQLTEQQRQVIALRYGLEDGQVMTLASIGDRLQISRERVRQLEREALHTLRQARSQVQEYLAS</sequence>
<proteinExistence type="inferred from homology"/>
<organism>
    <name type="scientific">Synechococcus elongatus (strain ATCC 33912 / PCC 7942 / FACHB-805)</name>
    <name type="common">Anacystis nidulans R2</name>
    <dbReference type="NCBI Taxonomy" id="1140"/>
    <lineage>
        <taxon>Bacteria</taxon>
        <taxon>Bacillati</taxon>
        <taxon>Cyanobacteriota</taxon>
        <taxon>Cyanophyceae</taxon>
        <taxon>Synechococcales</taxon>
        <taxon>Synechococcaceae</taxon>
        <taxon>Synechococcus</taxon>
    </lineage>
</organism>
<name>SIGA3_SYNE7</name>
<reference key="1">
    <citation type="submission" date="1999-03" db="EMBL/GenBank/DDBJ databases">
        <title>A group 2 sigma factor gene rpoD3 of Synechococcus PCC7942.</title>
        <authorList>
            <person name="Tanaka K."/>
        </authorList>
    </citation>
    <scope>NUCLEOTIDE SEQUENCE [GENOMIC DNA]</scope>
</reference>
<reference key="2">
    <citation type="submission" date="2005-08" db="EMBL/GenBank/DDBJ databases">
        <title>Complete sequence of chromosome 1 of Synechococcus elongatus PCC 7942.</title>
        <authorList>
            <consortium name="US DOE Joint Genome Institute"/>
            <person name="Copeland A."/>
            <person name="Lucas S."/>
            <person name="Lapidus A."/>
            <person name="Barry K."/>
            <person name="Detter J.C."/>
            <person name="Glavina T."/>
            <person name="Hammon N."/>
            <person name="Israni S."/>
            <person name="Pitluck S."/>
            <person name="Schmutz J."/>
            <person name="Larimer F."/>
            <person name="Land M."/>
            <person name="Kyrpides N."/>
            <person name="Lykidis A."/>
            <person name="Golden S."/>
            <person name="Richardson P."/>
        </authorList>
    </citation>
    <scope>NUCLEOTIDE SEQUENCE [LARGE SCALE GENOMIC DNA]</scope>
    <source>
        <strain>ATCC 33912 / PCC 7942 / FACHB-805</strain>
    </source>
</reference>
<evidence type="ECO:0000250" key="1"/>
<evidence type="ECO:0000305" key="2"/>
<feature type="chain" id="PRO_0000345947" description="RNA polymerase sigma factor SigA3">
    <location>
        <begin position="1"/>
        <end position="320"/>
    </location>
</feature>
<feature type="DNA-binding region" description="H-T-H motif" evidence="1">
    <location>
        <begin position="282"/>
        <end position="301"/>
    </location>
</feature>
<feature type="region of interest" description="Sigma-70 factor domain-2" evidence="1">
    <location>
        <begin position="89"/>
        <end position="159"/>
    </location>
</feature>
<feature type="region of interest" description="Sigma-70 factor domain-3" evidence="1">
    <location>
        <begin position="168"/>
        <end position="243"/>
    </location>
</feature>
<feature type="region of interest" description="Sigma-70 factor domain-4" evidence="1">
    <location>
        <begin position="256"/>
        <end position="310"/>
    </location>
</feature>
<feature type="short sequence motif" description="Interaction with polymerase core subunit RpoC">
    <location>
        <begin position="113"/>
        <end position="116"/>
    </location>
</feature>
<feature type="sequence conflict" description="In Ref. 1; BAA86957." evidence="2" ref="1">
    <original>GR</original>
    <variation>S</variation>
    <location>
        <begin position="185"/>
        <end position="186"/>
    </location>
</feature>
<feature type="sequence conflict" description="In Ref. 1; BAA86957." evidence="2" ref="1">
    <original>CTTPE</original>
    <variation>MQRRRK</variation>
    <location>
        <begin position="237"/>
        <end position="241"/>
    </location>
</feature>